<sequence length="169" mass="18955">MAPKKAKRRAGAEGSSNVFSMFDQTQIQEFKEAFTVIDQNRDGIIDKEDLRDTFAAMGRLNVKNEELDAMMKEASGPINFTVFLTMFGEKLKGADPEDVITGAFKVLDPEGKGTIKKQFLEELLTTQCDRFSQEEIKNMWAAFPPDVGGNVDYKNICYVITHGDAKDQE</sequence>
<keyword id="KW-0002">3D-structure</keyword>
<keyword id="KW-0106">Calcium</keyword>
<keyword id="KW-0479">Metal-binding</keyword>
<keyword id="KW-0488">Methylation</keyword>
<keyword id="KW-0505">Motor protein</keyword>
<keyword id="KW-0514">Muscle protein</keyword>
<keyword id="KW-0518">Myosin</keyword>
<keyword id="KW-0597">Phosphoprotein</keyword>
<keyword id="KW-1185">Reference proteome</keyword>
<keyword id="KW-0677">Repeat</keyword>
<dbReference type="EMBL" id="U77943">
    <property type="protein sequence ID" value="AAB19118.1"/>
    <property type="molecule type" value="mRNA"/>
</dbReference>
<dbReference type="EMBL" id="BC055869">
    <property type="protein sequence ID" value="AAH55869.1"/>
    <property type="molecule type" value="mRNA"/>
</dbReference>
<dbReference type="CCDS" id="CCDS40140.1"/>
<dbReference type="RefSeq" id="NP_058034.1">
    <property type="nucleotide sequence ID" value="NM_016754.5"/>
</dbReference>
<dbReference type="PDB" id="7NEP">
    <property type="method" value="EM"/>
    <property type="resolution" value="10.20 A"/>
    <property type="chains" value="R/S=21-164"/>
</dbReference>
<dbReference type="PDB" id="7QIO">
    <property type="method" value="EM"/>
    <property type="resolution" value="9.00 A"/>
    <property type="chains" value="P/Q=1-169"/>
</dbReference>
<dbReference type="PDB" id="9GZ1">
    <property type="method" value="EM"/>
    <property type="resolution" value="3.70 A"/>
    <property type="chains" value="D/F=2-169"/>
</dbReference>
<dbReference type="PDBsum" id="7NEP"/>
<dbReference type="PDBsum" id="7QIO"/>
<dbReference type="PDBsum" id="9GZ1"/>
<dbReference type="EMDB" id="EMD-12289"/>
<dbReference type="EMDB" id="EMD-13993"/>
<dbReference type="EMDB" id="EMD-51719"/>
<dbReference type="SMR" id="P97457"/>
<dbReference type="BioGRID" id="201660">
    <property type="interactions" value="5"/>
</dbReference>
<dbReference type="FunCoup" id="P97457">
    <property type="interactions" value="415"/>
</dbReference>
<dbReference type="IntAct" id="P97457">
    <property type="interactions" value="2"/>
</dbReference>
<dbReference type="MINT" id="P97457"/>
<dbReference type="STRING" id="10090.ENSMUSP00000032910"/>
<dbReference type="GlyGen" id="P97457">
    <property type="glycosylation" value="1 site, 1 O-linked glycan (1 site)"/>
</dbReference>
<dbReference type="iPTMnet" id="P97457"/>
<dbReference type="PhosphoSitePlus" id="P97457"/>
<dbReference type="jPOST" id="P97457"/>
<dbReference type="PaxDb" id="10090-ENSMUSP00000032910"/>
<dbReference type="PeptideAtlas" id="P97457"/>
<dbReference type="ProteomicsDB" id="295916"/>
<dbReference type="Antibodypedia" id="13671">
    <property type="antibodies" value="179 antibodies from 29 providers"/>
</dbReference>
<dbReference type="DNASU" id="17907"/>
<dbReference type="Ensembl" id="ENSMUST00000032910.13">
    <property type="protein sequence ID" value="ENSMUSP00000032910.7"/>
    <property type="gene ID" value="ENSMUSG00000030672.13"/>
</dbReference>
<dbReference type="GeneID" id="17907"/>
<dbReference type="KEGG" id="mmu:17907"/>
<dbReference type="UCSC" id="uc009jup.1">
    <property type="organism name" value="mouse"/>
</dbReference>
<dbReference type="AGR" id="MGI:97273"/>
<dbReference type="CTD" id="17907"/>
<dbReference type="MGI" id="MGI:97273">
    <property type="gene designation" value="Mylpf"/>
</dbReference>
<dbReference type="VEuPathDB" id="HostDB:ENSMUSG00000030672"/>
<dbReference type="eggNOG" id="KOG0031">
    <property type="taxonomic scope" value="Eukaryota"/>
</dbReference>
<dbReference type="GeneTree" id="ENSGT00940000159038"/>
<dbReference type="HOGENOM" id="CLU_061288_9_0_1"/>
<dbReference type="InParanoid" id="P97457"/>
<dbReference type="OMA" id="KDLYAMM"/>
<dbReference type="OrthoDB" id="429467at2759"/>
<dbReference type="PhylomeDB" id="P97457"/>
<dbReference type="TreeFam" id="TF314218"/>
<dbReference type="Reactome" id="R-MMU-445355">
    <property type="pathway name" value="Smooth Muscle Contraction"/>
</dbReference>
<dbReference type="BioGRID-ORCS" id="17907">
    <property type="hits" value="1 hit in 77 CRISPR screens"/>
</dbReference>
<dbReference type="ChiTaRS" id="Mylpf">
    <property type="organism name" value="mouse"/>
</dbReference>
<dbReference type="PRO" id="PR:P97457"/>
<dbReference type="Proteomes" id="UP000000589">
    <property type="component" value="Chromosome 7"/>
</dbReference>
<dbReference type="RNAct" id="P97457">
    <property type="molecule type" value="protein"/>
</dbReference>
<dbReference type="Bgee" id="ENSMUSG00000030672">
    <property type="expression patterns" value="Expressed in temporalis muscle and 203 other cell types or tissues"/>
</dbReference>
<dbReference type="ExpressionAtlas" id="P97457">
    <property type="expression patterns" value="baseline and differential"/>
</dbReference>
<dbReference type="GO" id="GO:0016459">
    <property type="term" value="C:myosin complex"/>
    <property type="evidence" value="ECO:0007669"/>
    <property type="project" value="UniProtKB-KW"/>
</dbReference>
<dbReference type="GO" id="GO:0005509">
    <property type="term" value="F:calcium ion binding"/>
    <property type="evidence" value="ECO:0007669"/>
    <property type="project" value="InterPro"/>
</dbReference>
<dbReference type="GO" id="GO:0008307">
    <property type="term" value="F:structural constituent of muscle"/>
    <property type="evidence" value="ECO:0000315"/>
    <property type="project" value="BHF-UCL"/>
</dbReference>
<dbReference type="GO" id="GO:0006936">
    <property type="term" value="P:muscle contraction"/>
    <property type="evidence" value="ECO:0007669"/>
    <property type="project" value="Ensembl"/>
</dbReference>
<dbReference type="GO" id="GO:0007519">
    <property type="term" value="P:skeletal muscle tissue development"/>
    <property type="evidence" value="ECO:0000315"/>
    <property type="project" value="BHF-UCL"/>
</dbReference>
<dbReference type="FunFam" id="1.10.238.10:FF:000010">
    <property type="entry name" value="Myosin regulatory light chain 2, atrial isoform"/>
    <property type="match status" value="1"/>
</dbReference>
<dbReference type="FunFam" id="1.10.238.10:FF:000007">
    <property type="entry name" value="Putative myosin regulatory light chain sqh"/>
    <property type="match status" value="1"/>
</dbReference>
<dbReference type="Gene3D" id="1.10.238.10">
    <property type="entry name" value="EF-hand"/>
    <property type="match status" value="2"/>
</dbReference>
<dbReference type="InterPro" id="IPR011992">
    <property type="entry name" value="EF-hand-dom_pair"/>
</dbReference>
<dbReference type="InterPro" id="IPR018247">
    <property type="entry name" value="EF_Hand_1_Ca_BS"/>
</dbReference>
<dbReference type="InterPro" id="IPR002048">
    <property type="entry name" value="EF_hand_dom"/>
</dbReference>
<dbReference type="InterPro" id="IPR050403">
    <property type="entry name" value="Myosin_RLC"/>
</dbReference>
<dbReference type="PANTHER" id="PTHR23049">
    <property type="entry name" value="MYOSIN REGULATORY LIGHT CHAIN 2"/>
    <property type="match status" value="1"/>
</dbReference>
<dbReference type="Pfam" id="PF13405">
    <property type="entry name" value="EF-hand_6"/>
    <property type="match status" value="1"/>
</dbReference>
<dbReference type="SMART" id="SM00054">
    <property type="entry name" value="EFh"/>
    <property type="match status" value="2"/>
</dbReference>
<dbReference type="SUPFAM" id="SSF47473">
    <property type="entry name" value="EF-hand"/>
    <property type="match status" value="1"/>
</dbReference>
<dbReference type="PROSITE" id="PS00018">
    <property type="entry name" value="EF_HAND_1"/>
    <property type="match status" value="1"/>
</dbReference>
<dbReference type="PROSITE" id="PS50222">
    <property type="entry name" value="EF_HAND_2"/>
    <property type="match status" value="3"/>
</dbReference>
<gene>
    <name type="primary">Myl11</name>
    <name evidence="7" type="synonym">Mylpf</name>
</gene>
<accession>P97457</accession>
<organism>
    <name type="scientific">Mus musculus</name>
    <name type="common">Mouse</name>
    <dbReference type="NCBI Taxonomy" id="10090"/>
    <lineage>
        <taxon>Eukaryota</taxon>
        <taxon>Metazoa</taxon>
        <taxon>Chordata</taxon>
        <taxon>Craniata</taxon>
        <taxon>Vertebrata</taxon>
        <taxon>Euteleostomi</taxon>
        <taxon>Mammalia</taxon>
        <taxon>Eutheria</taxon>
        <taxon>Euarchontoglires</taxon>
        <taxon>Glires</taxon>
        <taxon>Rodentia</taxon>
        <taxon>Myomorpha</taxon>
        <taxon>Muroidea</taxon>
        <taxon>Muridae</taxon>
        <taxon>Murinae</taxon>
        <taxon>Mus</taxon>
        <taxon>Mus</taxon>
    </lineage>
</organism>
<reference key="1">
    <citation type="submission" date="1996-11" db="EMBL/GenBank/DDBJ databases">
        <authorList>
            <person name="Park K.W."/>
            <person name="Park W.J."/>
        </authorList>
    </citation>
    <scope>NUCLEOTIDE SEQUENCE [MRNA]</scope>
    <source>
        <tissue>Embryo</tissue>
    </source>
</reference>
<reference key="2">
    <citation type="journal article" date="1995" name="Cell. Mol. Biol. Res.">
        <title>Remodeling the mammalian heart using transgenesis.</title>
        <authorList>
            <person name="Palermo J."/>
            <person name="Gulick J."/>
            <person name="Ng W."/>
            <person name="Grupp I.L."/>
            <person name="Grupp G."/>
            <person name="Robbins J."/>
        </authorList>
    </citation>
    <scope>NUCLEOTIDE SEQUENCE [MRNA]</scope>
</reference>
<reference key="3">
    <citation type="journal article" date="2004" name="Genome Res.">
        <title>The status, quality, and expansion of the NIH full-length cDNA project: the Mammalian Gene Collection (MGC).</title>
        <authorList>
            <consortium name="The MGC Project Team"/>
        </authorList>
    </citation>
    <scope>NUCLEOTIDE SEQUENCE [LARGE SCALE MRNA]</scope>
    <source>
        <strain>Czech II</strain>
        <tissue>Mammary gland</tissue>
    </source>
</reference>
<reference key="4">
    <citation type="journal article" date="2007" name="FASEB J.">
        <title>Fast skeletal muscle regulatory light chain is required for fast and slow skeletal muscle development.</title>
        <authorList>
            <person name="Wang Y."/>
            <person name="Szczesna-Cordary D."/>
            <person name="Craig R."/>
            <person name="Diaz-Perez Z."/>
            <person name="Guzman G."/>
            <person name="Miller T."/>
            <person name="Potter J.D."/>
        </authorList>
    </citation>
    <scope>FUNCTION</scope>
    <scope>DISRUPTION PHENOTYPE</scope>
</reference>
<reference key="5">
    <citation type="journal article" date="2007" name="Proc. Natl. Acad. Sci. U.S.A.">
        <title>Large-scale phosphorylation analysis of mouse liver.</title>
        <authorList>
            <person name="Villen J."/>
            <person name="Beausoleil S.A."/>
            <person name="Gerber S.A."/>
            <person name="Gygi S.P."/>
        </authorList>
    </citation>
    <scope>IDENTIFICATION BY MASS SPECTROMETRY [LARGE SCALE ANALYSIS]</scope>
    <source>
        <tissue>Liver</tissue>
    </source>
</reference>
<reference key="6">
    <citation type="journal article" date="2010" name="Cell">
        <title>A tissue-specific atlas of mouse protein phosphorylation and expression.</title>
        <authorList>
            <person name="Huttlin E.L."/>
            <person name="Jedrychowski M.P."/>
            <person name="Elias J.E."/>
            <person name="Goswami T."/>
            <person name="Rad R."/>
            <person name="Beausoleil S.A."/>
            <person name="Villen J."/>
            <person name="Haas W."/>
            <person name="Sowa M.E."/>
            <person name="Gygi S.P."/>
        </authorList>
    </citation>
    <scope>PHOSPHORYLATION [LARGE SCALE ANALYSIS] AT SER-15 AND SER-16</scope>
    <scope>IDENTIFICATION BY MASS SPECTROMETRY [LARGE SCALE ANALYSIS]</scope>
    <source>
        <tissue>Brown adipose tissue</tissue>
        <tissue>Lung</tissue>
    </source>
</reference>
<name>MYL11_MOUSE</name>
<protein>
    <recommendedName>
        <fullName>Myosin regulatory light chain 11</fullName>
    </recommendedName>
    <alternativeName>
        <fullName>Fast skeletal myosin light chain 2</fullName>
    </alternativeName>
    <alternativeName>
        <fullName>MLC2F</fullName>
    </alternativeName>
    <alternativeName>
        <fullName>Myosin light chain 11</fullName>
    </alternativeName>
    <alternativeName>
        <fullName>Myosin regulatory light chain 2, skeletal muscle isoform</fullName>
    </alternativeName>
</protein>
<feature type="initiator methionine" description="Removed" evidence="2">
    <location>
        <position position="1"/>
    </location>
</feature>
<feature type="chain" id="PRO_0000019310" description="Myosin regulatory light chain 11">
    <location>
        <begin position="2"/>
        <end position="169"/>
    </location>
</feature>
<feature type="domain" description="EF-hand 1" evidence="4">
    <location>
        <begin position="25"/>
        <end position="60"/>
    </location>
</feature>
<feature type="domain" description="EF-hand 2" evidence="4">
    <location>
        <begin position="95"/>
        <end position="130"/>
    </location>
</feature>
<feature type="domain" description="EF-hand 3" evidence="4">
    <location>
        <begin position="131"/>
        <end position="166"/>
    </location>
</feature>
<feature type="binding site" evidence="4">
    <location>
        <position position="38"/>
    </location>
    <ligand>
        <name>Ca(2+)</name>
        <dbReference type="ChEBI" id="CHEBI:29108"/>
    </ligand>
</feature>
<feature type="binding site" evidence="4">
    <location>
        <position position="40"/>
    </location>
    <ligand>
        <name>Ca(2+)</name>
        <dbReference type="ChEBI" id="CHEBI:29108"/>
    </ligand>
</feature>
<feature type="binding site" evidence="4">
    <location>
        <position position="42"/>
    </location>
    <ligand>
        <name>Ca(2+)</name>
        <dbReference type="ChEBI" id="CHEBI:29108"/>
    </ligand>
</feature>
<feature type="binding site" evidence="4">
    <location>
        <position position="49"/>
    </location>
    <ligand>
        <name>Ca(2+)</name>
        <dbReference type="ChEBI" id="CHEBI:29108"/>
    </ligand>
</feature>
<feature type="modified residue" description="N,N,N-trimethylalanine" evidence="2">
    <location>
        <position position="2"/>
    </location>
</feature>
<feature type="modified residue" description="Phosphoserine" evidence="8">
    <location>
        <position position="15"/>
    </location>
</feature>
<feature type="modified residue" description="Phosphoserine" evidence="8">
    <location>
        <position position="16"/>
    </location>
</feature>
<feature type="modified residue" description="Phosphothreonine" evidence="3">
    <location>
        <position position="25"/>
    </location>
</feature>
<feature type="modified residue" description="Phosphothreonine" evidence="3">
    <location>
        <position position="35"/>
    </location>
</feature>
<feature type="modified residue" description="Phosphoserine" evidence="3">
    <location>
        <position position="75"/>
    </location>
</feature>
<feature type="modified residue" description="Phosphothreonine" evidence="3">
    <location>
        <position position="101"/>
    </location>
</feature>
<proteinExistence type="evidence at protein level"/>
<evidence type="ECO:0000250" key="1">
    <source>
        <dbReference type="UniProtKB" id="O93409"/>
    </source>
</evidence>
<evidence type="ECO:0000250" key="2">
    <source>
        <dbReference type="UniProtKB" id="P02608"/>
    </source>
</evidence>
<evidence type="ECO:0000250" key="3">
    <source>
        <dbReference type="UniProtKB" id="P04466"/>
    </source>
</evidence>
<evidence type="ECO:0000255" key="4">
    <source>
        <dbReference type="PROSITE-ProRule" id="PRU00448"/>
    </source>
</evidence>
<evidence type="ECO:0000269" key="5">
    <source>
    </source>
</evidence>
<evidence type="ECO:0000305" key="6"/>
<evidence type="ECO:0000312" key="7">
    <source>
        <dbReference type="MGI" id="MGI:97273"/>
    </source>
</evidence>
<evidence type="ECO:0007744" key="8">
    <source>
    </source>
</evidence>
<comment type="function">
    <text evidence="1 5">Myosin regulatory subunit that plays an essential role to maintain muscle integrity during early development (PubMed:17356007). Plays a role in regulation of muscle contraction (By similarity).</text>
</comment>
<comment type="subunit">
    <text evidence="6">Myosin is a hexamer of 2 heavy chains and 4 light chains.</text>
</comment>
<comment type="disruption phenotype">
    <text evidence="5">Deficient mice completely lack skeletal muscle and die immediately after birth because of respiratory failure.</text>
</comment>
<comment type="miscellaneous">
    <text>This chain binds calcium.</text>
</comment>